<sequence>MARSVWKGPFVDGYLLKKAEKVREGGRNEVIKMWSRRSTILPQFVGLTFGVYNGNKHVPVSVSEEMVGHKFGEFAPTRTYYGHGADKKAKRK</sequence>
<protein>
    <recommendedName>
        <fullName evidence="1">Small ribosomal subunit protein uS19</fullName>
    </recommendedName>
    <alternativeName>
        <fullName evidence="2">30S ribosomal protein S19</fullName>
    </alternativeName>
</protein>
<evidence type="ECO:0000255" key="1">
    <source>
        <dbReference type="HAMAP-Rule" id="MF_00531"/>
    </source>
</evidence>
<evidence type="ECO:0000305" key="2"/>
<gene>
    <name evidence="1" type="primary">rpsS</name>
    <name type="ordered locus">R01360</name>
    <name type="ORF">SMc01305</name>
</gene>
<comment type="function">
    <text evidence="1">Protein S19 forms a complex with S13 that binds strongly to the 16S ribosomal RNA.</text>
</comment>
<comment type="similarity">
    <text evidence="1">Belongs to the universal ribosomal protein uS19 family.</text>
</comment>
<dbReference type="EMBL" id="AL591688">
    <property type="protein sequence ID" value="CAC45939.1"/>
    <property type="molecule type" value="Genomic_DNA"/>
</dbReference>
<dbReference type="RefSeq" id="NP_385466.1">
    <property type="nucleotide sequence ID" value="NC_003047.1"/>
</dbReference>
<dbReference type="RefSeq" id="WP_002964358.1">
    <property type="nucleotide sequence ID" value="NC_003047.1"/>
</dbReference>
<dbReference type="SMR" id="P66488"/>
<dbReference type="EnsemblBacteria" id="CAC45939">
    <property type="protein sequence ID" value="CAC45939"/>
    <property type="gene ID" value="SMc01305"/>
</dbReference>
<dbReference type="GeneID" id="97533528"/>
<dbReference type="KEGG" id="sme:SMc01305"/>
<dbReference type="PATRIC" id="fig|266834.11.peg.2776"/>
<dbReference type="eggNOG" id="COG0185">
    <property type="taxonomic scope" value="Bacteria"/>
</dbReference>
<dbReference type="HOGENOM" id="CLU_144911_0_1_5"/>
<dbReference type="OrthoDB" id="9797833at2"/>
<dbReference type="PRO" id="PR:P66488"/>
<dbReference type="Proteomes" id="UP000001976">
    <property type="component" value="Chromosome"/>
</dbReference>
<dbReference type="GO" id="GO:0005737">
    <property type="term" value="C:cytoplasm"/>
    <property type="evidence" value="ECO:0007669"/>
    <property type="project" value="UniProtKB-ARBA"/>
</dbReference>
<dbReference type="GO" id="GO:0015935">
    <property type="term" value="C:small ribosomal subunit"/>
    <property type="evidence" value="ECO:0007669"/>
    <property type="project" value="InterPro"/>
</dbReference>
<dbReference type="GO" id="GO:0019843">
    <property type="term" value="F:rRNA binding"/>
    <property type="evidence" value="ECO:0007669"/>
    <property type="project" value="UniProtKB-UniRule"/>
</dbReference>
<dbReference type="GO" id="GO:0003735">
    <property type="term" value="F:structural constituent of ribosome"/>
    <property type="evidence" value="ECO:0007669"/>
    <property type="project" value="InterPro"/>
</dbReference>
<dbReference type="GO" id="GO:0000028">
    <property type="term" value="P:ribosomal small subunit assembly"/>
    <property type="evidence" value="ECO:0007669"/>
    <property type="project" value="TreeGrafter"/>
</dbReference>
<dbReference type="GO" id="GO:0006412">
    <property type="term" value="P:translation"/>
    <property type="evidence" value="ECO:0007669"/>
    <property type="project" value="UniProtKB-UniRule"/>
</dbReference>
<dbReference type="FunFam" id="3.30.860.10:FF:000001">
    <property type="entry name" value="30S ribosomal protein S19"/>
    <property type="match status" value="1"/>
</dbReference>
<dbReference type="Gene3D" id="3.30.860.10">
    <property type="entry name" value="30s Ribosomal Protein S19, Chain A"/>
    <property type="match status" value="1"/>
</dbReference>
<dbReference type="HAMAP" id="MF_00531">
    <property type="entry name" value="Ribosomal_uS19"/>
    <property type="match status" value="1"/>
</dbReference>
<dbReference type="InterPro" id="IPR002222">
    <property type="entry name" value="Ribosomal_uS19"/>
</dbReference>
<dbReference type="InterPro" id="IPR005732">
    <property type="entry name" value="Ribosomal_uS19_bac-type"/>
</dbReference>
<dbReference type="InterPro" id="IPR020934">
    <property type="entry name" value="Ribosomal_uS19_CS"/>
</dbReference>
<dbReference type="InterPro" id="IPR023575">
    <property type="entry name" value="Ribosomal_uS19_SF"/>
</dbReference>
<dbReference type="NCBIfam" id="TIGR01050">
    <property type="entry name" value="rpsS_bact"/>
    <property type="match status" value="1"/>
</dbReference>
<dbReference type="PANTHER" id="PTHR11880">
    <property type="entry name" value="RIBOSOMAL PROTEIN S19P FAMILY MEMBER"/>
    <property type="match status" value="1"/>
</dbReference>
<dbReference type="PANTHER" id="PTHR11880:SF8">
    <property type="entry name" value="SMALL RIBOSOMAL SUBUNIT PROTEIN US19M"/>
    <property type="match status" value="1"/>
</dbReference>
<dbReference type="Pfam" id="PF00203">
    <property type="entry name" value="Ribosomal_S19"/>
    <property type="match status" value="1"/>
</dbReference>
<dbReference type="PIRSF" id="PIRSF002144">
    <property type="entry name" value="Ribosomal_S19"/>
    <property type="match status" value="1"/>
</dbReference>
<dbReference type="PRINTS" id="PR00975">
    <property type="entry name" value="RIBOSOMALS19"/>
</dbReference>
<dbReference type="SUPFAM" id="SSF54570">
    <property type="entry name" value="Ribosomal protein S19"/>
    <property type="match status" value="1"/>
</dbReference>
<dbReference type="PROSITE" id="PS00323">
    <property type="entry name" value="RIBOSOMAL_S19"/>
    <property type="match status" value="1"/>
</dbReference>
<reference key="1">
    <citation type="journal article" date="2001" name="Proc. Natl. Acad. Sci. U.S.A.">
        <title>Analysis of the chromosome sequence of the legume symbiont Sinorhizobium meliloti strain 1021.</title>
        <authorList>
            <person name="Capela D."/>
            <person name="Barloy-Hubler F."/>
            <person name="Gouzy J."/>
            <person name="Bothe G."/>
            <person name="Ampe F."/>
            <person name="Batut J."/>
            <person name="Boistard P."/>
            <person name="Becker A."/>
            <person name="Boutry M."/>
            <person name="Cadieu E."/>
            <person name="Dreano S."/>
            <person name="Gloux S."/>
            <person name="Godrie T."/>
            <person name="Goffeau A."/>
            <person name="Kahn D."/>
            <person name="Kiss E."/>
            <person name="Lelaure V."/>
            <person name="Masuy D."/>
            <person name="Pohl T."/>
            <person name="Portetelle D."/>
            <person name="Puehler A."/>
            <person name="Purnelle B."/>
            <person name="Ramsperger U."/>
            <person name="Renard C."/>
            <person name="Thebault P."/>
            <person name="Vandenbol M."/>
            <person name="Weidner S."/>
            <person name="Galibert F."/>
        </authorList>
    </citation>
    <scope>NUCLEOTIDE SEQUENCE [LARGE SCALE GENOMIC DNA]</scope>
    <source>
        <strain>1021</strain>
    </source>
</reference>
<reference key="2">
    <citation type="journal article" date="2001" name="Science">
        <title>The composite genome of the legume symbiont Sinorhizobium meliloti.</title>
        <authorList>
            <person name="Galibert F."/>
            <person name="Finan T.M."/>
            <person name="Long S.R."/>
            <person name="Puehler A."/>
            <person name="Abola P."/>
            <person name="Ampe F."/>
            <person name="Barloy-Hubler F."/>
            <person name="Barnett M.J."/>
            <person name="Becker A."/>
            <person name="Boistard P."/>
            <person name="Bothe G."/>
            <person name="Boutry M."/>
            <person name="Bowser L."/>
            <person name="Buhrmester J."/>
            <person name="Cadieu E."/>
            <person name="Capela D."/>
            <person name="Chain P."/>
            <person name="Cowie A."/>
            <person name="Davis R.W."/>
            <person name="Dreano S."/>
            <person name="Federspiel N.A."/>
            <person name="Fisher R.F."/>
            <person name="Gloux S."/>
            <person name="Godrie T."/>
            <person name="Goffeau A."/>
            <person name="Golding B."/>
            <person name="Gouzy J."/>
            <person name="Gurjal M."/>
            <person name="Hernandez-Lucas I."/>
            <person name="Hong A."/>
            <person name="Huizar L."/>
            <person name="Hyman R.W."/>
            <person name="Jones T."/>
            <person name="Kahn D."/>
            <person name="Kahn M.L."/>
            <person name="Kalman S."/>
            <person name="Keating D.H."/>
            <person name="Kiss E."/>
            <person name="Komp C."/>
            <person name="Lelaure V."/>
            <person name="Masuy D."/>
            <person name="Palm C."/>
            <person name="Peck M.C."/>
            <person name="Pohl T.M."/>
            <person name="Portetelle D."/>
            <person name="Purnelle B."/>
            <person name="Ramsperger U."/>
            <person name="Surzycki R."/>
            <person name="Thebault P."/>
            <person name="Vandenbol M."/>
            <person name="Vorhoelter F.J."/>
            <person name="Weidner S."/>
            <person name="Wells D.H."/>
            <person name="Wong K."/>
            <person name="Yeh K.-C."/>
            <person name="Batut J."/>
        </authorList>
    </citation>
    <scope>NUCLEOTIDE SEQUENCE [LARGE SCALE GENOMIC DNA]</scope>
    <source>
        <strain>1021</strain>
    </source>
</reference>
<feature type="chain" id="PRO_0000129888" description="Small ribosomal subunit protein uS19">
    <location>
        <begin position="1"/>
        <end position="92"/>
    </location>
</feature>
<accession>P66488</accession>
<accession>Q8YHN6</accession>
<accession>Q92QG6</accession>
<proteinExistence type="inferred from homology"/>
<keyword id="KW-1185">Reference proteome</keyword>
<keyword id="KW-0687">Ribonucleoprotein</keyword>
<keyword id="KW-0689">Ribosomal protein</keyword>
<keyword id="KW-0694">RNA-binding</keyword>
<keyword id="KW-0699">rRNA-binding</keyword>
<name>RS19_RHIME</name>
<organism>
    <name type="scientific">Rhizobium meliloti (strain 1021)</name>
    <name type="common">Ensifer meliloti</name>
    <name type="synonym">Sinorhizobium meliloti</name>
    <dbReference type="NCBI Taxonomy" id="266834"/>
    <lineage>
        <taxon>Bacteria</taxon>
        <taxon>Pseudomonadati</taxon>
        <taxon>Pseudomonadota</taxon>
        <taxon>Alphaproteobacteria</taxon>
        <taxon>Hyphomicrobiales</taxon>
        <taxon>Rhizobiaceae</taxon>
        <taxon>Sinorhizobium/Ensifer group</taxon>
        <taxon>Sinorhizobium</taxon>
    </lineage>
</organism>